<proteinExistence type="inferred from homology"/>
<accession>Q9ZW91</accession>
<feature type="chain" id="PRO_0000396033" description="F-box protein KIB3">
    <location>
        <begin position="1"/>
        <end position="450"/>
    </location>
</feature>
<feature type="domain" description="F-box" evidence="2">
    <location>
        <begin position="20"/>
        <end position="50"/>
    </location>
</feature>
<gene>
    <name evidence="4" type="primary">KIB3</name>
    <name evidence="5" type="ordered locus">At1g67160</name>
    <name evidence="6" type="ORF">F5A8.7</name>
</gene>
<comment type="function">
    <text evidence="3">Component of SCF(ASK-cullin-F-box) E3 ubiquitin ligase complexes, which may mediate the ubiquitination and subsequent proteasomal degradation of target proteins. Required for brassinosteroid (BR) signal transduction. Mediates ASK7/BIN2/SK21 inactivation both by competing with substrate binding (e.g. BZR1) and by promoting its ubiquitination and subsequent proteasomal degradation.</text>
</comment>
<comment type="subcellular location">
    <subcellularLocation>
        <location evidence="1">Cytoplasm</location>
    </subcellularLocation>
    <subcellularLocation>
        <location evidence="1">Nucleus</location>
        <location evidence="1">Nucleolus</location>
    </subcellularLocation>
</comment>
<comment type="disruption phenotype">
    <text evidence="3">Abolished brassinosteroid (BR)-induced ASK7/BIN2/SK21 degradation, and BR-insensitivity. Suppression of the constitutive BR-response phenotype in the dominant mutant bzr1-1D, and accumulation of phosphorylated BZR1.</text>
</comment>
<sequence length="450" mass="51240">MSDSDGKNMEGRFEAAYIVDLVRLILERLSFVDFHRARCVSSTWYVASKSVIGVTNPTTPWIILFPNKNVENNGSCKLFDPHENKTYIIRDLGFDMSTSRCLASSGSWFLMFDHRADFHLLNLFTRERILLPSLESIDGERYMRFKRPISGSHIEIDKAVLWVDDKSRDYFVFCNLSSYVAYHHKRGDDNNSWKVLQPIKHQGCVDMVFKESKLYMISAHQCLTVFDFSGGVSPVEMECASFGSSVCVNRFHMKYFSNLAVTLSGEVLIIVGGKMDSSPEAKCVFTVNKMDPKSSEFTVLIKSIGDEALLLDLGITVPAKDGVMRDCIYFSNDQYHRCCGISLRDGYNADRICVYQIGSDYVVQEFEHLTTSSTKLFKDARWFFPTFGDKCCFHLWILHPVILQAKKLQKSNLKGTKPVTREKTTIVNNVDGTTTQREKTTKGKNMIGKK</sequence>
<keyword id="KW-1070">Brassinosteroid signaling pathway</keyword>
<keyword id="KW-0963">Cytoplasm</keyword>
<keyword id="KW-0539">Nucleus</keyword>
<keyword id="KW-1185">Reference proteome</keyword>
<keyword id="KW-0833">Ubl conjugation pathway</keyword>
<evidence type="ECO:0000250" key="1">
    <source>
        <dbReference type="UniProtKB" id="Q9SU05"/>
    </source>
</evidence>
<evidence type="ECO:0000255" key="2"/>
<evidence type="ECO:0000269" key="3">
    <source>
    </source>
</evidence>
<evidence type="ECO:0000303" key="4">
    <source>
    </source>
</evidence>
<evidence type="ECO:0000312" key="5">
    <source>
        <dbReference type="Araport" id="AT1G67160"/>
    </source>
</evidence>
<evidence type="ECO:0000312" key="6">
    <source>
        <dbReference type="EMBL" id="AAD10661.1"/>
    </source>
</evidence>
<reference key="1">
    <citation type="journal article" date="2000" name="Nature">
        <title>Sequence and analysis of chromosome 1 of the plant Arabidopsis thaliana.</title>
        <authorList>
            <person name="Theologis A."/>
            <person name="Ecker J.R."/>
            <person name="Palm C.J."/>
            <person name="Federspiel N.A."/>
            <person name="Kaul S."/>
            <person name="White O."/>
            <person name="Alonso J."/>
            <person name="Altafi H."/>
            <person name="Araujo R."/>
            <person name="Bowman C.L."/>
            <person name="Brooks S.Y."/>
            <person name="Buehler E."/>
            <person name="Chan A."/>
            <person name="Chao Q."/>
            <person name="Chen H."/>
            <person name="Cheuk R.F."/>
            <person name="Chin C.W."/>
            <person name="Chung M.K."/>
            <person name="Conn L."/>
            <person name="Conway A.B."/>
            <person name="Conway A.R."/>
            <person name="Creasy T.H."/>
            <person name="Dewar K."/>
            <person name="Dunn P."/>
            <person name="Etgu P."/>
            <person name="Feldblyum T.V."/>
            <person name="Feng J.-D."/>
            <person name="Fong B."/>
            <person name="Fujii C.Y."/>
            <person name="Gill J.E."/>
            <person name="Goldsmith A.D."/>
            <person name="Haas B."/>
            <person name="Hansen N.F."/>
            <person name="Hughes B."/>
            <person name="Huizar L."/>
            <person name="Hunter J.L."/>
            <person name="Jenkins J."/>
            <person name="Johnson-Hopson C."/>
            <person name="Khan S."/>
            <person name="Khaykin E."/>
            <person name="Kim C.J."/>
            <person name="Koo H.L."/>
            <person name="Kremenetskaia I."/>
            <person name="Kurtz D.B."/>
            <person name="Kwan A."/>
            <person name="Lam B."/>
            <person name="Langin-Hooper S."/>
            <person name="Lee A."/>
            <person name="Lee J.M."/>
            <person name="Lenz C.A."/>
            <person name="Li J.H."/>
            <person name="Li Y.-P."/>
            <person name="Lin X."/>
            <person name="Liu S.X."/>
            <person name="Liu Z.A."/>
            <person name="Luros J.S."/>
            <person name="Maiti R."/>
            <person name="Marziali A."/>
            <person name="Militscher J."/>
            <person name="Miranda M."/>
            <person name="Nguyen M."/>
            <person name="Nierman W.C."/>
            <person name="Osborne B.I."/>
            <person name="Pai G."/>
            <person name="Peterson J."/>
            <person name="Pham P.K."/>
            <person name="Rizzo M."/>
            <person name="Rooney T."/>
            <person name="Rowley D."/>
            <person name="Sakano H."/>
            <person name="Salzberg S.L."/>
            <person name="Schwartz J.R."/>
            <person name="Shinn P."/>
            <person name="Southwick A.M."/>
            <person name="Sun H."/>
            <person name="Tallon L.J."/>
            <person name="Tambunga G."/>
            <person name="Toriumi M.J."/>
            <person name="Town C.D."/>
            <person name="Utterback T."/>
            <person name="Van Aken S."/>
            <person name="Vaysberg M."/>
            <person name="Vysotskaia V.S."/>
            <person name="Walker M."/>
            <person name="Wu D."/>
            <person name="Yu G."/>
            <person name="Fraser C.M."/>
            <person name="Venter J.C."/>
            <person name="Davis R.W."/>
        </authorList>
    </citation>
    <scope>NUCLEOTIDE SEQUENCE [LARGE SCALE GENOMIC DNA]</scope>
    <source>
        <strain>cv. Columbia</strain>
    </source>
</reference>
<reference key="2">
    <citation type="journal article" date="2017" name="Plant J.">
        <title>Araport11: a complete reannotation of the Arabidopsis thaliana reference genome.</title>
        <authorList>
            <person name="Cheng C.Y."/>
            <person name="Krishnakumar V."/>
            <person name="Chan A.P."/>
            <person name="Thibaud-Nissen F."/>
            <person name="Schobel S."/>
            <person name="Town C.D."/>
        </authorList>
    </citation>
    <scope>GENOME REANNOTATION</scope>
    <source>
        <strain>cv. Columbia</strain>
    </source>
</reference>
<reference key="3">
    <citation type="journal article" date="2017" name="Mol. Cell">
        <title>The F-box protein KIB1 mediates brassinosteroid-induced inactivation and degradation of GSK3-like kinases in Arabidopsis.</title>
        <authorList>
            <person name="Zhu J.-Y."/>
            <person name="Li Y."/>
            <person name="Cao D.-M."/>
            <person name="Yang H."/>
            <person name="Oh E."/>
            <person name="Bi Y."/>
            <person name="Zhu S."/>
            <person name="Wang Z.-Y."/>
        </authorList>
    </citation>
    <scope>FUNCTION</scope>
    <scope>DISRUPTION PHENOTYPE</scope>
    <source>
        <strain>cv. Columbia</strain>
        <strain>cv. Wassilewskija</strain>
    </source>
</reference>
<name>KIB3_ARATH</name>
<protein>
    <recommendedName>
        <fullName evidence="4">F-box protein KIB3</fullName>
    </recommendedName>
    <alternativeName>
        <fullName evidence="4">Protein KINK SUPPRESSED IN BZR1-1D 3</fullName>
    </alternativeName>
</protein>
<organism>
    <name type="scientific">Arabidopsis thaliana</name>
    <name type="common">Mouse-ear cress</name>
    <dbReference type="NCBI Taxonomy" id="3702"/>
    <lineage>
        <taxon>Eukaryota</taxon>
        <taxon>Viridiplantae</taxon>
        <taxon>Streptophyta</taxon>
        <taxon>Embryophyta</taxon>
        <taxon>Tracheophyta</taxon>
        <taxon>Spermatophyta</taxon>
        <taxon>Magnoliopsida</taxon>
        <taxon>eudicotyledons</taxon>
        <taxon>Gunneridae</taxon>
        <taxon>Pentapetalae</taxon>
        <taxon>rosids</taxon>
        <taxon>malvids</taxon>
        <taxon>Brassicales</taxon>
        <taxon>Brassicaceae</taxon>
        <taxon>Camelineae</taxon>
        <taxon>Arabidopsis</taxon>
    </lineage>
</organism>
<dbReference type="EMBL" id="AC004146">
    <property type="protein sequence ID" value="AAD10661.1"/>
    <property type="molecule type" value="Genomic_DNA"/>
</dbReference>
<dbReference type="EMBL" id="CP002684">
    <property type="protein sequence ID" value="AEE34607.1"/>
    <property type="molecule type" value="Genomic_DNA"/>
</dbReference>
<dbReference type="PIR" id="E96695">
    <property type="entry name" value="E96695"/>
</dbReference>
<dbReference type="RefSeq" id="NP_176887.1">
    <property type="nucleotide sequence ID" value="NM_105386.1"/>
</dbReference>
<dbReference type="FunCoup" id="Q9ZW91">
    <property type="interactions" value="35"/>
</dbReference>
<dbReference type="PaxDb" id="3702-AT1G67160.1"/>
<dbReference type="ProteomicsDB" id="250690"/>
<dbReference type="EnsemblPlants" id="AT1G67160.1">
    <property type="protein sequence ID" value="AT1G67160.1"/>
    <property type="gene ID" value="AT1G67160"/>
</dbReference>
<dbReference type="GeneID" id="843036"/>
<dbReference type="Gramene" id="AT1G67160.1">
    <property type="protein sequence ID" value="AT1G67160.1"/>
    <property type="gene ID" value="AT1G67160"/>
</dbReference>
<dbReference type="KEGG" id="ath:AT1G67160"/>
<dbReference type="Araport" id="AT1G67160"/>
<dbReference type="TAIR" id="AT1G67160">
    <property type="gene designation" value="KIB3"/>
</dbReference>
<dbReference type="eggNOG" id="ENOG502S0MJ">
    <property type="taxonomic scope" value="Eukaryota"/>
</dbReference>
<dbReference type="HOGENOM" id="CLU_019286_7_1_1"/>
<dbReference type="InParanoid" id="Q9ZW91"/>
<dbReference type="PhylomeDB" id="Q9ZW91"/>
<dbReference type="PRO" id="PR:Q9ZW91"/>
<dbReference type="Proteomes" id="UP000006548">
    <property type="component" value="Chromosome 1"/>
</dbReference>
<dbReference type="ExpressionAtlas" id="Q9ZW91">
    <property type="expression patterns" value="baseline"/>
</dbReference>
<dbReference type="GO" id="GO:0005737">
    <property type="term" value="C:cytoplasm"/>
    <property type="evidence" value="ECO:0000250"/>
    <property type="project" value="UniProtKB"/>
</dbReference>
<dbReference type="GO" id="GO:0005730">
    <property type="term" value="C:nucleolus"/>
    <property type="evidence" value="ECO:0000250"/>
    <property type="project" value="UniProtKB"/>
</dbReference>
<dbReference type="GO" id="GO:0009742">
    <property type="term" value="P:brassinosteroid mediated signaling pathway"/>
    <property type="evidence" value="ECO:0000316"/>
    <property type="project" value="TAIR"/>
</dbReference>
<dbReference type="GO" id="GO:1900459">
    <property type="term" value="P:positive regulation of brassinosteroid mediated signaling pathway"/>
    <property type="evidence" value="ECO:0000315"/>
    <property type="project" value="UniProtKB"/>
</dbReference>
<dbReference type="GO" id="GO:0006511">
    <property type="term" value="P:ubiquitin-dependent protein catabolic process"/>
    <property type="evidence" value="ECO:0000314"/>
    <property type="project" value="UniProtKB"/>
</dbReference>
<dbReference type="InterPro" id="IPR036047">
    <property type="entry name" value="F-box-like_dom_sf"/>
</dbReference>
<dbReference type="InterPro" id="IPR050942">
    <property type="entry name" value="F-box_BR-signaling"/>
</dbReference>
<dbReference type="InterPro" id="IPR001810">
    <property type="entry name" value="F-box_dom"/>
</dbReference>
<dbReference type="InterPro" id="IPR005174">
    <property type="entry name" value="KIB1-4_b-propeller"/>
</dbReference>
<dbReference type="PANTHER" id="PTHR44259:SF15">
    <property type="entry name" value="F-BOX PROTEIN KIB2-RELATED"/>
    <property type="match status" value="1"/>
</dbReference>
<dbReference type="PANTHER" id="PTHR44259">
    <property type="entry name" value="OS07G0183000 PROTEIN-RELATED"/>
    <property type="match status" value="1"/>
</dbReference>
<dbReference type="Pfam" id="PF03478">
    <property type="entry name" value="Beta-prop_KIB1-4"/>
    <property type="match status" value="1"/>
</dbReference>
<dbReference type="Pfam" id="PF00646">
    <property type="entry name" value="F-box"/>
    <property type="match status" value="1"/>
</dbReference>
<dbReference type="SUPFAM" id="SSF81383">
    <property type="entry name" value="F-box domain"/>
    <property type="match status" value="1"/>
</dbReference>